<sequence length="46" mass="5426">MKRTFQPSVLKRNRSHGFRARMATKNGRQVLARRRAKSRSRLTVSK</sequence>
<reference key="1">
    <citation type="submission" date="2008-02" db="EMBL/GenBank/DDBJ databases">
        <title>Complete sequence of Yersinia pseudotuberculosis YPIII.</title>
        <authorList>
            <consortium name="US DOE Joint Genome Institute"/>
            <person name="Copeland A."/>
            <person name="Lucas S."/>
            <person name="Lapidus A."/>
            <person name="Glavina del Rio T."/>
            <person name="Dalin E."/>
            <person name="Tice H."/>
            <person name="Bruce D."/>
            <person name="Goodwin L."/>
            <person name="Pitluck S."/>
            <person name="Munk A.C."/>
            <person name="Brettin T."/>
            <person name="Detter J.C."/>
            <person name="Han C."/>
            <person name="Tapia R."/>
            <person name="Schmutz J."/>
            <person name="Larimer F."/>
            <person name="Land M."/>
            <person name="Hauser L."/>
            <person name="Challacombe J.F."/>
            <person name="Green L."/>
            <person name="Lindler L.E."/>
            <person name="Nikolich M.P."/>
            <person name="Richardson P."/>
        </authorList>
    </citation>
    <scope>NUCLEOTIDE SEQUENCE [LARGE SCALE GENOMIC DNA]</scope>
    <source>
        <strain>YPIII</strain>
    </source>
</reference>
<dbReference type="EMBL" id="CP000950">
    <property type="protein sequence ID" value="ACA70505.1"/>
    <property type="molecule type" value="Genomic_DNA"/>
</dbReference>
<dbReference type="RefSeq" id="WP_002220736.1">
    <property type="nucleotide sequence ID" value="NZ_CP009792.1"/>
</dbReference>
<dbReference type="SMR" id="B1JRQ5"/>
<dbReference type="GeneID" id="97458397"/>
<dbReference type="KEGG" id="ypy:YPK_4249"/>
<dbReference type="PATRIC" id="fig|502800.11.peg.601"/>
<dbReference type="GO" id="GO:1990904">
    <property type="term" value="C:ribonucleoprotein complex"/>
    <property type="evidence" value="ECO:0007669"/>
    <property type="project" value="UniProtKB-KW"/>
</dbReference>
<dbReference type="GO" id="GO:0005840">
    <property type="term" value="C:ribosome"/>
    <property type="evidence" value="ECO:0007669"/>
    <property type="project" value="UniProtKB-KW"/>
</dbReference>
<dbReference type="GO" id="GO:0003735">
    <property type="term" value="F:structural constituent of ribosome"/>
    <property type="evidence" value="ECO:0007669"/>
    <property type="project" value="InterPro"/>
</dbReference>
<dbReference type="GO" id="GO:0006412">
    <property type="term" value="P:translation"/>
    <property type="evidence" value="ECO:0007669"/>
    <property type="project" value="UniProtKB-UniRule"/>
</dbReference>
<dbReference type="FunFam" id="1.10.287.3980:FF:000001">
    <property type="entry name" value="Mitochondrial ribosomal protein L34"/>
    <property type="match status" value="1"/>
</dbReference>
<dbReference type="Gene3D" id="1.10.287.3980">
    <property type="match status" value="1"/>
</dbReference>
<dbReference type="HAMAP" id="MF_00391">
    <property type="entry name" value="Ribosomal_bL34"/>
    <property type="match status" value="1"/>
</dbReference>
<dbReference type="InterPro" id="IPR000271">
    <property type="entry name" value="Ribosomal_bL34"/>
</dbReference>
<dbReference type="InterPro" id="IPR020939">
    <property type="entry name" value="Ribosomal_bL34_CS"/>
</dbReference>
<dbReference type="NCBIfam" id="TIGR01030">
    <property type="entry name" value="rpmH_bact"/>
    <property type="match status" value="1"/>
</dbReference>
<dbReference type="PANTHER" id="PTHR14503:SF4">
    <property type="entry name" value="LARGE RIBOSOMAL SUBUNIT PROTEIN BL34M"/>
    <property type="match status" value="1"/>
</dbReference>
<dbReference type="PANTHER" id="PTHR14503">
    <property type="entry name" value="MITOCHONDRIAL RIBOSOMAL PROTEIN 34 FAMILY MEMBER"/>
    <property type="match status" value="1"/>
</dbReference>
<dbReference type="Pfam" id="PF00468">
    <property type="entry name" value="Ribosomal_L34"/>
    <property type="match status" value="1"/>
</dbReference>
<dbReference type="PROSITE" id="PS00784">
    <property type="entry name" value="RIBOSOMAL_L34"/>
    <property type="match status" value="1"/>
</dbReference>
<keyword id="KW-0687">Ribonucleoprotein</keyword>
<keyword id="KW-0689">Ribosomal protein</keyword>
<protein>
    <recommendedName>
        <fullName evidence="1">Large ribosomal subunit protein bL34</fullName>
    </recommendedName>
    <alternativeName>
        <fullName evidence="3">50S ribosomal protein L34</fullName>
    </alternativeName>
</protein>
<gene>
    <name evidence="1" type="primary">rpmH</name>
    <name type="ordered locus">YPK_4249</name>
</gene>
<feature type="chain" id="PRO_1000196150" description="Large ribosomal subunit protein bL34">
    <location>
        <begin position="1"/>
        <end position="46"/>
    </location>
</feature>
<feature type="region of interest" description="Disordered" evidence="2">
    <location>
        <begin position="26"/>
        <end position="46"/>
    </location>
</feature>
<feature type="compositionally biased region" description="Basic residues" evidence="2">
    <location>
        <begin position="31"/>
        <end position="40"/>
    </location>
</feature>
<proteinExistence type="inferred from homology"/>
<evidence type="ECO:0000255" key="1">
    <source>
        <dbReference type="HAMAP-Rule" id="MF_00391"/>
    </source>
</evidence>
<evidence type="ECO:0000256" key="2">
    <source>
        <dbReference type="SAM" id="MobiDB-lite"/>
    </source>
</evidence>
<evidence type="ECO:0000305" key="3"/>
<accession>B1JRQ5</accession>
<comment type="similarity">
    <text evidence="1">Belongs to the bacterial ribosomal protein bL34 family.</text>
</comment>
<organism>
    <name type="scientific">Yersinia pseudotuberculosis serotype O:3 (strain YPIII)</name>
    <dbReference type="NCBI Taxonomy" id="502800"/>
    <lineage>
        <taxon>Bacteria</taxon>
        <taxon>Pseudomonadati</taxon>
        <taxon>Pseudomonadota</taxon>
        <taxon>Gammaproteobacteria</taxon>
        <taxon>Enterobacterales</taxon>
        <taxon>Yersiniaceae</taxon>
        <taxon>Yersinia</taxon>
    </lineage>
</organism>
<name>RL34_YERPY</name>